<organism>
    <name type="scientific">Populus trichocarpa</name>
    <name type="common">Western balsam poplar</name>
    <name type="synonym">Populus balsamifera subsp. trichocarpa</name>
    <dbReference type="NCBI Taxonomy" id="3694"/>
    <lineage>
        <taxon>Eukaryota</taxon>
        <taxon>Viridiplantae</taxon>
        <taxon>Streptophyta</taxon>
        <taxon>Embryophyta</taxon>
        <taxon>Tracheophyta</taxon>
        <taxon>Spermatophyta</taxon>
        <taxon>Magnoliopsida</taxon>
        <taxon>eudicotyledons</taxon>
        <taxon>Gunneridae</taxon>
        <taxon>Pentapetalae</taxon>
        <taxon>rosids</taxon>
        <taxon>fabids</taxon>
        <taxon>Malpighiales</taxon>
        <taxon>Salicaceae</taxon>
        <taxon>Saliceae</taxon>
        <taxon>Populus</taxon>
    </lineage>
</organism>
<geneLocation type="chloroplast"/>
<keyword id="KW-0150">Chloroplast</keyword>
<keyword id="KW-0472">Membrane</keyword>
<keyword id="KW-0520">NAD</keyword>
<keyword id="KW-0521">NADP</keyword>
<keyword id="KW-0934">Plastid</keyword>
<keyword id="KW-0618">Plastoquinone</keyword>
<keyword id="KW-0874">Quinone</keyword>
<keyword id="KW-1185">Reference proteome</keyword>
<keyword id="KW-0793">Thylakoid</keyword>
<keyword id="KW-1278">Translocase</keyword>
<keyword id="KW-0812">Transmembrane</keyword>
<keyword id="KW-1133">Transmembrane helix</keyword>
<keyword id="KW-0813">Transport</keyword>
<gene>
    <name evidence="1" type="primary">ndhE</name>
    <name type="ordered locus">Poptr_cp081</name>
</gene>
<sequence length="101" mass="11296">MMLEYVLGLSAYLFSIGIYGLITSRNMVRALMCLELILNAVNINFVTFSDFFDSRQLKGNIFSIFVISIAAAEAAIGPAIVSSIYRNRKSIRINQLNLLNK</sequence>
<name>NU4LC_POPTR</name>
<comment type="function">
    <text evidence="1">NDH shuttles electrons from NAD(P)H:plastoquinone, via FMN and iron-sulfur (Fe-S) centers, to quinones in the photosynthetic chain and possibly in a chloroplast respiratory chain. The immediate electron acceptor for the enzyme in this species is believed to be plastoquinone. Couples the redox reaction to proton translocation, and thus conserves the redox energy in a proton gradient.</text>
</comment>
<comment type="catalytic activity">
    <reaction evidence="1">
        <text>a plastoquinone + NADH + (n+1) H(+)(in) = a plastoquinol + NAD(+) + n H(+)(out)</text>
        <dbReference type="Rhea" id="RHEA:42608"/>
        <dbReference type="Rhea" id="RHEA-COMP:9561"/>
        <dbReference type="Rhea" id="RHEA-COMP:9562"/>
        <dbReference type="ChEBI" id="CHEBI:15378"/>
        <dbReference type="ChEBI" id="CHEBI:17757"/>
        <dbReference type="ChEBI" id="CHEBI:57540"/>
        <dbReference type="ChEBI" id="CHEBI:57945"/>
        <dbReference type="ChEBI" id="CHEBI:62192"/>
    </reaction>
</comment>
<comment type="catalytic activity">
    <reaction evidence="1">
        <text>a plastoquinone + NADPH + (n+1) H(+)(in) = a plastoquinol + NADP(+) + n H(+)(out)</text>
        <dbReference type="Rhea" id="RHEA:42612"/>
        <dbReference type="Rhea" id="RHEA-COMP:9561"/>
        <dbReference type="Rhea" id="RHEA-COMP:9562"/>
        <dbReference type="ChEBI" id="CHEBI:15378"/>
        <dbReference type="ChEBI" id="CHEBI:17757"/>
        <dbReference type="ChEBI" id="CHEBI:57783"/>
        <dbReference type="ChEBI" id="CHEBI:58349"/>
        <dbReference type="ChEBI" id="CHEBI:62192"/>
    </reaction>
</comment>
<comment type="subunit">
    <text evidence="1">NDH is composed of at least 16 different subunits, 5 of which are encoded in the nucleus.</text>
</comment>
<comment type="subcellular location">
    <subcellularLocation>
        <location evidence="1">Plastid</location>
        <location evidence="1">Chloroplast thylakoid membrane</location>
        <topology evidence="1">Multi-pass membrane protein</topology>
    </subcellularLocation>
</comment>
<comment type="similarity">
    <text evidence="1">Belongs to the complex I subunit 4L family.</text>
</comment>
<dbReference type="EC" id="7.1.1.-" evidence="1"/>
<dbReference type="EMBL" id="EF489041">
    <property type="protein sequence ID" value="ABO36763.1"/>
    <property type="molecule type" value="Genomic_DNA"/>
</dbReference>
<dbReference type="RefSeq" id="YP_001109559.1">
    <property type="nucleotide sequence ID" value="NC_009143.1"/>
</dbReference>
<dbReference type="SMR" id="A4GYW8"/>
<dbReference type="FunCoup" id="A4GYW8">
    <property type="interactions" value="62"/>
</dbReference>
<dbReference type="STRING" id="3694.A4GYW8"/>
<dbReference type="GeneID" id="4929742"/>
<dbReference type="KEGG" id="pop:4929742"/>
<dbReference type="InParanoid" id="A4GYW8"/>
<dbReference type="OrthoDB" id="1925110at2759"/>
<dbReference type="Proteomes" id="UP000006729">
    <property type="component" value="Chloroplast"/>
</dbReference>
<dbReference type="GO" id="GO:0009535">
    <property type="term" value="C:chloroplast thylakoid membrane"/>
    <property type="evidence" value="ECO:0007669"/>
    <property type="project" value="UniProtKB-SubCell"/>
</dbReference>
<dbReference type="GO" id="GO:0030964">
    <property type="term" value="C:NADH dehydrogenase complex"/>
    <property type="evidence" value="ECO:0000318"/>
    <property type="project" value="GO_Central"/>
</dbReference>
<dbReference type="GO" id="GO:0016655">
    <property type="term" value="F:oxidoreductase activity, acting on NAD(P)H, quinone or similar compound as acceptor"/>
    <property type="evidence" value="ECO:0007669"/>
    <property type="project" value="UniProtKB-UniRule"/>
</dbReference>
<dbReference type="GO" id="GO:0048038">
    <property type="term" value="F:quinone binding"/>
    <property type="evidence" value="ECO:0007669"/>
    <property type="project" value="UniProtKB-KW"/>
</dbReference>
<dbReference type="GO" id="GO:0042773">
    <property type="term" value="P:ATP synthesis coupled electron transport"/>
    <property type="evidence" value="ECO:0007669"/>
    <property type="project" value="InterPro"/>
</dbReference>
<dbReference type="GO" id="GO:0019684">
    <property type="term" value="P:photosynthesis, light reaction"/>
    <property type="evidence" value="ECO:0007669"/>
    <property type="project" value="UniProtKB-UniRule"/>
</dbReference>
<dbReference type="FunFam" id="1.10.287.3510:FF:000001">
    <property type="entry name" value="NADH-quinone oxidoreductase subunit K"/>
    <property type="match status" value="1"/>
</dbReference>
<dbReference type="Gene3D" id="1.10.287.3510">
    <property type="match status" value="1"/>
</dbReference>
<dbReference type="HAMAP" id="MF_01456">
    <property type="entry name" value="NDH1_NuoK"/>
    <property type="match status" value="1"/>
</dbReference>
<dbReference type="InterPro" id="IPR001133">
    <property type="entry name" value="NADH_UbQ_OxRdtase_chain4L/K"/>
</dbReference>
<dbReference type="InterPro" id="IPR039428">
    <property type="entry name" value="NUOK/Mnh_C1-like"/>
</dbReference>
<dbReference type="NCBIfam" id="NF004320">
    <property type="entry name" value="PRK05715.1-2"/>
    <property type="match status" value="1"/>
</dbReference>
<dbReference type="NCBIfam" id="NF004322">
    <property type="entry name" value="PRK05715.1-4"/>
    <property type="match status" value="1"/>
</dbReference>
<dbReference type="PANTHER" id="PTHR11434:SF16">
    <property type="entry name" value="NADH-UBIQUINONE OXIDOREDUCTASE CHAIN 4L"/>
    <property type="match status" value="1"/>
</dbReference>
<dbReference type="PANTHER" id="PTHR11434">
    <property type="entry name" value="NADH-UBIQUINONE OXIDOREDUCTASE SUBUNIT ND4L"/>
    <property type="match status" value="1"/>
</dbReference>
<dbReference type="Pfam" id="PF00420">
    <property type="entry name" value="Oxidored_q2"/>
    <property type="match status" value="1"/>
</dbReference>
<protein>
    <recommendedName>
        <fullName evidence="1">NAD(P)H-quinone oxidoreductase subunit 4L, chloroplastic</fullName>
        <ecNumber evidence="1">7.1.1.-</ecNumber>
    </recommendedName>
    <alternativeName>
        <fullName evidence="1">NAD(P)H dehydrogenase subunit 4L</fullName>
    </alternativeName>
    <alternativeName>
        <fullName evidence="1">NADH-plastoquinone oxidoreductase subunit 4L</fullName>
    </alternativeName>
</protein>
<feature type="chain" id="PRO_0000360364" description="NAD(P)H-quinone oxidoreductase subunit 4L, chloroplastic">
    <location>
        <begin position="1"/>
        <end position="101"/>
    </location>
</feature>
<feature type="transmembrane region" description="Helical" evidence="1">
    <location>
        <begin position="2"/>
        <end position="22"/>
    </location>
</feature>
<feature type="transmembrane region" description="Helical" evidence="1">
    <location>
        <begin position="32"/>
        <end position="52"/>
    </location>
</feature>
<feature type="transmembrane region" description="Helical" evidence="1">
    <location>
        <begin position="61"/>
        <end position="81"/>
    </location>
</feature>
<accession>A4GYW8</accession>
<reference key="1">
    <citation type="journal article" date="2006" name="Science">
        <title>The genome of black cottonwood, Populus trichocarpa (Torr. &amp; Gray).</title>
        <authorList>
            <person name="Tuskan G.A."/>
            <person name="Difazio S."/>
            <person name="Jansson S."/>
            <person name="Bohlmann J."/>
            <person name="Grigoriev I."/>
            <person name="Hellsten U."/>
            <person name="Putnam N."/>
            <person name="Ralph S."/>
            <person name="Rombauts S."/>
            <person name="Salamov A."/>
            <person name="Schein J."/>
            <person name="Sterck L."/>
            <person name="Aerts A."/>
            <person name="Bhalerao R.R."/>
            <person name="Bhalerao R.P."/>
            <person name="Blaudez D."/>
            <person name="Boerjan W."/>
            <person name="Brun A."/>
            <person name="Brunner A."/>
            <person name="Busov V."/>
            <person name="Campbell M."/>
            <person name="Carlson J."/>
            <person name="Chalot M."/>
            <person name="Chapman J."/>
            <person name="Chen G.-L."/>
            <person name="Cooper D."/>
            <person name="Coutinho P.M."/>
            <person name="Couturier J."/>
            <person name="Covert S."/>
            <person name="Cronk Q."/>
            <person name="Cunningham R."/>
            <person name="Davis J."/>
            <person name="Degroeve S."/>
            <person name="Dejardin A."/>
            <person name="dePamphilis C.W."/>
            <person name="Detter J."/>
            <person name="Dirks B."/>
            <person name="Dubchak I."/>
            <person name="Duplessis S."/>
            <person name="Ehlting J."/>
            <person name="Ellis B."/>
            <person name="Gendler K."/>
            <person name="Goodstein D."/>
            <person name="Gribskov M."/>
            <person name="Grimwood J."/>
            <person name="Groover A."/>
            <person name="Gunter L."/>
            <person name="Hamberger B."/>
            <person name="Heinze B."/>
            <person name="Helariutta Y."/>
            <person name="Henrissat B."/>
            <person name="Holligan D."/>
            <person name="Holt R."/>
            <person name="Huang W."/>
            <person name="Islam-Faridi N."/>
            <person name="Jones S."/>
            <person name="Jones-Rhoades M."/>
            <person name="Jorgensen R."/>
            <person name="Joshi C."/>
            <person name="Kangasjaervi J."/>
            <person name="Karlsson J."/>
            <person name="Kelleher C."/>
            <person name="Kirkpatrick R."/>
            <person name="Kirst M."/>
            <person name="Kohler A."/>
            <person name="Kalluri U."/>
            <person name="Larimer F."/>
            <person name="Leebens-Mack J."/>
            <person name="Leple J.-C."/>
            <person name="Locascio P."/>
            <person name="Lou Y."/>
            <person name="Lucas S."/>
            <person name="Martin F."/>
            <person name="Montanini B."/>
            <person name="Napoli C."/>
            <person name="Nelson D.R."/>
            <person name="Nelson C."/>
            <person name="Nieminen K."/>
            <person name="Nilsson O."/>
            <person name="Pereda V."/>
            <person name="Peter G."/>
            <person name="Philippe R."/>
            <person name="Pilate G."/>
            <person name="Poliakov A."/>
            <person name="Razumovskaya J."/>
            <person name="Richardson P."/>
            <person name="Rinaldi C."/>
            <person name="Ritland K."/>
            <person name="Rouze P."/>
            <person name="Ryaboy D."/>
            <person name="Schmutz J."/>
            <person name="Schrader J."/>
            <person name="Segerman B."/>
            <person name="Shin H."/>
            <person name="Siddiqui A."/>
            <person name="Sterky F."/>
            <person name="Terry A."/>
            <person name="Tsai C.-J."/>
            <person name="Uberbacher E."/>
            <person name="Unneberg P."/>
            <person name="Vahala J."/>
            <person name="Wall K."/>
            <person name="Wessler S."/>
            <person name="Yang G."/>
            <person name="Yin T."/>
            <person name="Douglas C."/>
            <person name="Marra M."/>
            <person name="Sandberg G."/>
            <person name="Van de Peer Y."/>
            <person name="Rokhsar D.S."/>
        </authorList>
    </citation>
    <scope>NUCLEOTIDE SEQUENCE [LARGE SCALE GENOMIC DNA]</scope>
    <source>
        <strain>cv. Nisqually</strain>
    </source>
</reference>
<evidence type="ECO:0000255" key="1">
    <source>
        <dbReference type="HAMAP-Rule" id="MF_01456"/>
    </source>
</evidence>
<proteinExistence type="inferred from homology"/>